<proteinExistence type="inferred from homology"/>
<protein>
    <recommendedName>
        <fullName evidence="1">S-adenosylmethionine:tRNA ribosyltransferase-isomerase</fullName>
        <ecNumber evidence="1">2.4.99.17</ecNumber>
    </recommendedName>
    <alternativeName>
        <fullName evidence="1">Queuosine biosynthesis protein QueA</fullName>
    </alternativeName>
</protein>
<dbReference type="EC" id="2.4.99.17" evidence="1"/>
<dbReference type="EMBL" id="CP000232">
    <property type="protein sequence ID" value="ABC19997.1"/>
    <property type="molecule type" value="Genomic_DNA"/>
</dbReference>
<dbReference type="RefSeq" id="YP_430540.1">
    <property type="nucleotide sequence ID" value="NC_007644.1"/>
</dbReference>
<dbReference type="SMR" id="Q2RHU2"/>
<dbReference type="STRING" id="264732.Moth_1695"/>
<dbReference type="EnsemblBacteria" id="ABC19997">
    <property type="protein sequence ID" value="ABC19997"/>
    <property type="gene ID" value="Moth_1695"/>
</dbReference>
<dbReference type="KEGG" id="mta:Moth_1695"/>
<dbReference type="PATRIC" id="fig|264732.11.peg.1836"/>
<dbReference type="eggNOG" id="COG0809">
    <property type="taxonomic scope" value="Bacteria"/>
</dbReference>
<dbReference type="HOGENOM" id="CLU_039110_1_0_9"/>
<dbReference type="OrthoDB" id="9805933at2"/>
<dbReference type="UniPathway" id="UPA00392"/>
<dbReference type="GO" id="GO:0005737">
    <property type="term" value="C:cytoplasm"/>
    <property type="evidence" value="ECO:0007669"/>
    <property type="project" value="UniProtKB-SubCell"/>
</dbReference>
<dbReference type="GO" id="GO:0051075">
    <property type="term" value="F:S-adenosylmethionine:tRNA ribosyltransferase-isomerase activity"/>
    <property type="evidence" value="ECO:0007669"/>
    <property type="project" value="UniProtKB-EC"/>
</dbReference>
<dbReference type="GO" id="GO:0008616">
    <property type="term" value="P:queuosine biosynthetic process"/>
    <property type="evidence" value="ECO:0007669"/>
    <property type="project" value="UniProtKB-UniRule"/>
</dbReference>
<dbReference type="GO" id="GO:0002099">
    <property type="term" value="P:tRNA wobble guanine modification"/>
    <property type="evidence" value="ECO:0007669"/>
    <property type="project" value="TreeGrafter"/>
</dbReference>
<dbReference type="FunFam" id="2.40.10.240:FF:000002">
    <property type="entry name" value="S-adenosylmethionine:tRNA ribosyltransferase-isomerase"/>
    <property type="match status" value="1"/>
</dbReference>
<dbReference type="FunFam" id="3.40.1780.10:FF:000001">
    <property type="entry name" value="S-adenosylmethionine:tRNA ribosyltransferase-isomerase"/>
    <property type="match status" value="1"/>
</dbReference>
<dbReference type="Gene3D" id="2.40.10.240">
    <property type="entry name" value="QueA-like"/>
    <property type="match status" value="1"/>
</dbReference>
<dbReference type="Gene3D" id="3.40.1780.10">
    <property type="entry name" value="QueA-like"/>
    <property type="match status" value="1"/>
</dbReference>
<dbReference type="HAMAP" id="MF_00113">
    <property type="entry name" value="QueA"/>
    <property type="match status" value="1"/>
</dbReference>
<dbReference type="InterPro" id="IPR003699">
    <property type="entry name" value="QueA"/>
</dbReference>
<dbReference type="InterPro" id="IPR042118">
    <property type="entry name" value="QueA_dom1"/>
</dbReference>
<dbReference type="InterPro" id="IPR042119">
    <property type="entry name" value="QueA_dom2"/>
</dbReference>
<dbReference type="InterPro" id="IPR036100">
    <property type="entry name" value="QueA_sf"/>
</dbReference>
<dbReference type="NCBIfam" id="NF001140">
    <property type="entry name" value="PRK00147.1"/>
    <property type="match status" value="1"/>
</dbReference>
<dbReference type="NCBIfam" id="TIGR00113">
    <property type="entry name" value="queA"/>
    <property type="match status" value="1"/>
</dbReference>
<dbReference type="PANTHER" id="PTHR30307">
    <property type="entry name" value="S-ADENOSYLMETHIONINE:TRNA RIBOSYLTRANSFERASE-ISOMERASE"/>
    <property type="match status" value="1"/>
</dbReference>
<dbReference type="PANTHER" id="PTHR30307:SF0">
    <property type="entry name" value="S-ADENOSYLMETHIONINE:TRNA RIBOSYLTRANSFERASE-ISOMERASE"/>
    <property type="match status" value="1"/>
</dbReference>
<dbReference type="Pfam" id="PF02547">
    <property type="entry name" value="Queuosine_synth"/>
    <property type="match status" value="1"/>
</dbReference>
<dbReference type="SUPFAM" id="SSF111337">
    <property type="entry name" value="QueA-like"/>
    <property type="match status" value="1"/>
</dbReference>
<name>QUEA_MOOTA</name>
<evidence type="ECO:0000255" key="1">
    <source>
        <dbReference type="HAMAP-Rule" id="MF_00113"/>
    </source>
</evidence>
<comment type="function">
    <text evidence="1">Transfers and isomerizes the ribose moiety from AdoMet to the 7-aminomethyl group of 7-deazaguanine (preQ1-tRNA) to give epoxyqueuosine (oQ-tRNA).</text>
</comment>
<comment type="catalytic activity">
    <reaction evidence="1">
        <text>7-aminomethyl-7-carbaguanosine(34) in tRNA + S-adenosyl-L-methionine = epoxyqueuosine(34) in tRNA + adenine + L-methionine + 2 H(+)</text>
        <dbReference type="Rhea" id="RHEA:32155"/>
        <dbReference type="Rhea" id="RHEA-COMP:10342"/>
        <dbReference type="Rhea" id="RHEA-COMP:18582"/>
        <dbReference type="ChEBI" id="CHEBI:15378"/>
        <dbReference type="ChEBI" id="CHEBI:16708"/>
        <dbReference type="ChEBI" id="CHEBI:57844"/>
        <dbReference type="ChEBI" id="CHEBI:59789"/>
        <dbReference type="ChEBI" id="CHEBI:82833"/>
        <dbReference type="ChEBI" id="CHEBI:194443"/>
        <dbReference type="EC" id="2.4.99.17"/>
    </reaction>
</comment>
<comment type="pathway">
    <text evidence="1">tRNA modification; tRNA-queuosine biosynthesis.</text>
</comment>
<comment type="subunit">
    <text evidence="1">Monomer.</text>
</comment>
<comment type="subcellular location">
    <subcellularLocation>
        <location evidence="1">Cytoplasm</location>
    </subcellularLocation>
</comment>
<comment type="similarity">
    <text evidence="1">Belongs to the QueA family.</text>
</comment>
<gene>
    <name evidence="1" type="primary">queA</name>
    <name type="ordered locus">Moth_1695</name>
</gene>
<reference key="1">
    <citation type="journal article" date="2008" name="Environ. Microbiol.">
        <title>The complete genome sequence of Moorella thermoacetica (f. Clostridium thermoaceticum).</title>
        <authorList>
            <person name="Pierce E."/>
            <person name="Xie G."/>
            <person name="Barabote R.D."/>
            <person name="Saunders E."/>
            <person name="Han C.S."/>
            <person name="Detter J.C."/>
            <person name="Richardson P."/>
            <person name="Brettin T.S."/>
            <person name="Das A."/>
            <person name="Ljungdahl L.G."/>
            <person name="Ragsdale S.W."/>
        </authorList>
    </citation>
    <scope>NUCLEOTIDE SEQUENCE [LARGE SCALE GENOMIC DNA]</scope>
    <source>
        <strain>ATCC 39073 / JCM 9320</strain>
    </source>
</reference>
<accession>Q2RHU2</accession>
<keyword id="KW-0963">Cytoplasm</keyword>
<keyword id="KW-0671">Queuosine biosynthesis</keyword>
<keyword id="KW-0949">S-adenosyl-L-methionine</keyword>
<keyword id="KW-0808">Transferase</keyword>
<organism>
    <name type="scientific">Moorella thermoacetica (strain ATCC 39073 / JCM 9320)</name>
    <dbReference type="NCBI Taxonomy" id="264732"/>
    <lineage>
        <taxon>Bacteria</taxon>
        <taxon>Bacillati</taxon>
        <taxon>Bacillota</taxon>
        <taxon>Clostridia</taxon>
        <taxon>Moorellales</taxon>
        <taxon>Moorellaceae</taxon>
        <taxon>Moorella</taxon>
    </lineage>
</organism>
<feature type="chain" id="PRO_1000015236" description="S-adenosylmethionine:tRNA ribosyltransferase-isomerase">
    <location>
        <begin position="1"/>
        <end position="342"/>
    </location>
</feature>
<sequence>MRIEEFDYELPPGQIAQQPVEPRDASRLLVLHREGGFLEHRHFYDLPRYLHPGDVLVVNETKVIPARLWGYRAGTGAKIEVLLLTRQEGDTWETLVRPGRRVPVGAELIFGRGELQARVKGVTPAGGRIMEFSYQEGPWEALLERLGEMPLPPYIKEKPADPGRYQTVYAREEGSAAAPTAGLHFTPRLLKELREQGIEIASILLHVGLGTFRPVKVENIQEHVMHAEYYAVTPAAAATINAARARGHRVVAVGTTVVRTLETVATADGVIHAGSGWTDIFIYPGYRFKAIDSLITNFHLPRSTLLMLVSAFAGREKILDAYRVAVREGYRFYSFGDAMLIL</sequence>